<protein>
    <recommendedName>
        <fullName evidence="1">Arginine repressor</fullName>
    </recommendedName>
</protein>
<comment type="function">
    <text evidence="1">Regulates arginine biosynthesis genes.</text>
</comment>
<comment type="pathway">
    <text>Amino-acid biosynthesis; L-arginine biosynthesis [regulation].</text>
</comment>
<comment type="subcellular location">
    <subcellularLocation>
        <location evidence="1">Cytoplasm</location>
    </subcellularLocation>
</comment>
<comment type="similarity">
    <text evidence="1">Belongs to the ArgR family.</text>
</comment>
<gene>
    <name evidence="1" type="primary">argR</name>
    <name type="ordered locus">SPA3227</name>
</gene>
<accession>Q5PJU3</accession>
<keyword id="KW-0028">Amino-acid biosynthesis</keyword>
<keyword id="KW-0055">Arginine biosynthesis</keyword>
<keyword id="KW-0963">Cytoplasm</keyword>
<keyword id="KW-0238">DNA-binding</keyword>
<keyword id="KW-0678">Repressor</keyword>
<keyword id="KW-0804">Transcription</keyword>
<keyword id="KW-0805">Transcription regulation</keyword>
<dbReference type="EMBL" id="CP000026">
    <property type="protein sequence ID" value="AAV79050.1"/>
    <property type="molecule type" value="Genomic_DNA"/>
</dbReference>
<dbReference type="RefSeq" id="WP_001257852.1">
    <property type="nucleotide sequence ID" value="NC_006511.1"/>
</dbReference>
<dbReference type="SMR" id="Q5PJU3"/>
<dbReference type="KEGG" id="spt:SPA3227"/>
<dbReference type="HOGENOM" id="CLU_097103_2_0_6"/>
<dbReference type="UniPathway" id="UPA00068"/>
<dbReference type="Proteomes" id="UP000008185">
    <property type="component" value="Chromosome"/>
</dbReference>
<dbReference type="GO" id="GO:0005737">
    <property type="term" value="C:cytoplasm"/>
    <property type="evidence" value="ECO:0007669"/>
    <property type="project" value="UniProtKB-SubCell"/>
</dbReference>
<dbReference type="GO" id="GO:0034618">
    <property type="term" value="F:arginine binding"/>
    <property type="evidence" value="ECO:0007669"/>
    <property type="project" value="InterPro"/>
</dbReference>
<dbReference type="GO" id="GO:0003677">
    <property type="term" value="F:DNA binding"/>
    <property type="evidence" value="ECO:0007669"/>
    <property type="project" value="UniProtKB-KW"/>
</dbReference>
<dbReference type="GO" id="GO:0003700">
    <property type="term" value="F:DNA-binding transcription factor activity"/>
    <property type="evidence" value="ECO:0007669"/>
    <property type="project" value="UniProtKB-UniRule"/>
</dbReference>
<dbReference type="GO" id="GO:0006526">
    <property type="term" value="P:L-arginine biosynthetic process"/>
    <property type="evidence" value="ECO:0007669"/>
    <property type="project" value="UniProtKB-UniPathway"/>
</dbReference>
<dbReference type="GO" id="GO:0051259">
    <property type="term" value="P:protein complex oligomerization"/>
    <property type="evidence" value="ECO:0007669"/>
    <property type="project" value="InterPro"/>
</dbReference>
<dbReference type="GO" id="GO:1900079">
    <property type="term" value="P:regulation of arginine biosynthetic process"/>
    <property type="evidence" value="ECO:0007669"/>
    <property type="project" value="UniProtKB-UniRule"/>
</dbReference>
<dbReference type="FunFam" id="1.10.10.10:FF:000074">
    <property type="entry name" value="Arginine repressor"/>
    <property type="match status" value="1"/>
</dbReference>
<dbReference type="FunFam" id="3.30.1360.40:FF:000004">
    <property type="entry name" value="Arginine repressor"/>
    <property type="match status" value="1"/>
</dbReference>
<dbReference type="Gene3D" id="3.30.1360.40">
    <property type="match status" value="1"/>
</dbReference>
<dbReference type="Gene3D" id="1.10.10.10">
    <property type="entry name" value="Winged helix-like DNA-binding domain superfamily/Winged helix DNA-binding domain"/>
    <property type="match status" value="1"/>
</dbReference>
<dbReference type="HAMAP" id="MF_00173">
    <property type="entry name" value="Arg_repressor"/>
    <property type="match status" value="1"/>
</dbReference>
<dbReference type="InterPro" id="IPR001669">
    <property type="entry name" value="Arg_repress"/>
</dbReference>
<dbReference type="InterPro" id="IPR020899">
    <property type="entry name" value="Arg_repress_C"/>
</dbReference>
<dbReference type="InterPro" id="IPR036251">
    <property type="entry name" value="Arg_repress_C_sf"/>
</dbReference>
<dbReference type="InterPro" id="IPR020900">
    <property type="entry name" value="Arg_repress_DNA-bd"/>
</dbReference>
<dbReference type="InterPro" id="IPR036388">
    <property type="entry name" value="WH-like_DNA-bd_sf"/>
</dbReference>
<dbReference type="InterPro" id="IPR036390">
    <property type="entry name" value="WH_DNA-bd_sf"/>
</dbReference>
<dbReference type="NCBIfam" id="TIGR01529">
    <property type="entry name" value="argR_whole"/>
    <property type="match status" value="1"/>
</dbReference>
<dbReference type="NCBIfam" id="NF003457">
    <property type="entry name" value="PRK05066.1"/>
    <property type="match status" value="1"/>
</dbReference>
<dbReference type="PANTHER" id="PTHR34471">
    <property type="entry name" value="ARGININE REPRESSOR"/>
    <property type="match status" value="1"/>
</dbReference>
<dbReference type="PANTHER" id="PTHR34471:SF1">
    <property type="entry name" value="ARGININE REPRESSOR"/>
    <property type="match status" value="1"/>
</dbReference>
<dbReference type="Pfam" id="PF01316">
    <property type="entry name" value="Arg_repressor"/>
    <property type="match status" value="1"/>
</dbReference>
<dbReference type="Pfam" id="PF02863">
    <property type="entry name" value="Arg_repressor_C"/>
    <property type="match status" value="1"/>
</dbReference>
<dbReference type="PRINTS" id="PR01467">
    <property type="entry name" value="ARGREPRESSOR"/>
</dbReference>
<dbReference type="SUPFAM" id="SSF55252">
    <property type="entry name" value="C-terminal domain of arginine repressor"/>
    <property type="match status" value="1"/>
</dbReference>
<dbReference type="SUPFAM" id="SSF46785">
    <property type="entry name" value="Winged helix' DNA-binding domain"/>
    <property type="match status" value="1"/>
</dbReference>
<organism>
    <name type="scientific">Salmonella paratyphi A (strain ATCC 9150 / SARB42)</name>
    <dbReference type="NCBI Taxonomy" id="295319"/>
    <lineage>
        <taxon>Bacteria</taxon>
        <taxon>Pseudomonadati</taxon>
        <taxon>Pseudomonadota</taxon>
        <taxon>Gammaproteobacteria</taxon>
        <taxon>Enterobacterales</taxon>
        <taxon>Enterobacteriaceae</taxon>
        <taxon>Salmonella</taxon>
    </lineage>
</organism>
<evidence type="ECO:0000255" key="1">
    <source>
        <dbReference type="HAMAP-Rule" id="MF_00173"/>
    </source>
</evidence>
<feature type="chain" id="PRO_1000023587" description="Arginine repressor">
    <location>
        <begin position="1"/>
        <end position="156"/>
    </location>
</feature>
<name>ARGR_SALPA</name>
<proteinExistence type="inferred from homology"/>
<reference key="1">
    <citation type="journal article" date="2004" name="Nat. Genet.">
        <title>Comparison of genome degradation in Paratyphi A and Typhi, human-restricted serovars of Salmonella enterica that cause typhoid.</title>
        <authorList>
            <person name="McClelland M."/>
            <person name="Sanderson K.E."/>
            <person name="Clifton S.W."/>
            <person name="Latreille P."/>
            <person name="Porwollik S."/>
            <person name="Sabo A."/>
            <person name="Meyer R."/>
            <person name="Bieri T."/>
            <person name="Ozersky P."/>
            <person name="McLellan M."/>
            <person name="Harkins C.R."/>
            <person name="Wang C."/>
            <person name="Nguyen C."/>
            <person name="Berghoff A."/>
            <person name="Elliott G."/>
            <person name="Kohlberg S."/>
            <person name="Strong C."/>
            <person name="Du F."/>
            <person name="Carter J."/>
            <person name="Kremizki C."/>
            <person name="Layman D."/>
            <person name="Leonard S."/>
            <person name="Sun H."/>
            <person name="Fulton L."/>
            <person name="Nash W."/>
            <person name="Miner T."/>
            <person name="Minx P."/>
            <person name="Delehaunty K."/>
            <person name="Fronick C."/>
            <person name="Magrini V."/>
            <person name="Nhan M."/>
            <person name="Warren W."/>
            <person name="Florea L."/>
            <person name="Spieth J."/>
            <person name="Wilson R.K."/>
        </authorList>
    </citation>
    <scope>NUCLEOTIDE SEQUENCE [LARGE SCALE GENOMIC DNA]</scope>
    <source>
        <strain>ATCC 9150 / SARB42</strain>
    </source>
</reference>
<sequence>MRSSAKQEELVRAFKALLKEEKFSSQGEIVLALQDQGFENINQSKVSRMLTKFGAVRTRNAKMEMVYCLPAELGVPTTSSPLKNLVLDIDYNDAVVVIHTSPGAAQLIARLLDSLGKAEGILGTIAGDDTIFTTPASGFSVRDLYEAILELFEQEL</sequence>